<evidence type="ECO:0000255" key="1">
    <source>
        <dbReference type="HAMAP-Rule" id="MF_00011"/>
    </source>
</evidence>
<evidence type="ECO:0000305" key="2"/>
<reference key="1">
    <citation type="journal article" date="2007" name="J. Bacteriol.">
        <title>The complete genome sequence of Bacillus thuringiensis Al Hakam.</title>
        <authorList>
            <person name="Challacombe J.F."/>
            <person name="Altherr M.R."/>
            <person name="Xie G."/>
            <person name="Bhotika S.S."/>
            <person name="Brown N."/>
            <person name="Bruce D."/>
            <person name="Campbell C.S."/>
            <person name="Campbell M.L."/>
            <person name="Chen J."/>
            <person name="Chertkov O."/>
            <person name="Cleland C."/>
            <person name="Dimitrijevic M."/>
            <person name="Doggett N.A."/>
            <person name="Fawcett J.J."/>
            <person name="Glavina T."/>
            <person name="Goodwin L.A."/>
            <person name="Green L.D."/>
            <person name="Han C.S."/>
            <person name="Hill K.K."/>
            <person name="Hitchcock P."/>
            <person name="Jackson P.J."/>
            <person name="Keim P."/>
            <person name="Kewalramani A.R."/>
            <person name="Longmire J."/>
            <person name="Lucas S."/>
            <person name="Malfatti S."/>
            <person name="Martinez D."/>
            <person name="McMurry K."/>
            <person name="Meincke L.J."/>
            <person name="Misra M."/>
            <person name="Moseman B.L."/>
            <person name="Mundt M."/>
            <person name="Munk A.C."/>
            <person name="Okinaka R.T."/>
            <person name="Parson-Quintana B."/>
            <person name="Reilly L.P."/>
            <person name="Richardson P."/>
            <person name="Robinson D.L."/>
            <person name="Saunders E."/>
            <person name="Tapia R."/>
            <person name="Tesmer J.G."/>
            <person name="Thayer N."/>
            <person name="Thompson L.S."/>
            <person name="Tice H."/>
            <person name="Ticknor L.O."/>
            <person name="Wills P.L."/>
            <person name="Gilna P."/>
            <person name="Brettin T.S."/>
        </authorList>
    </citation>
    <scope>NUCLEOTIDE SEQUENCE [LARGE SCALE GENOMIC DNA]</scope>
    <source>
        <strain>Al Hakam</strain>
    </source>
</reference>
<feature type="chain" id="PRO_0000321793" description="Adenylosuccinate synthetase">
    <location>
        <begin position="1"/>
        <end position="429"/>
    </location>
</feature>
<feature type="active site" description="Proton acceptor" evidence="1">
    <location>
        <position position="13"/>
    </location>
</feature>
<feature type="active site" description="Proton donor" evidence="1">
    <location>
        <position position="41"/>
    </location>
</feature>
<feature type="binding site" evidence="1">
    <location>
        <begin position="12"/>
        <end position="18"/>
    </location>
    <ligand>
        <name>GTP</name>
        <dbReference type="ChEBI" id="CHEBI:37565"/>
    </ligand>
</feature>
<feature type="binding site" description="in other chain" evidence="1">
    <location>
        <begin position="13"/>
        <end position="16"/>
    </location>
    <ligand>
        <name>IMP</name>
        <dbReference type="ChEBI" id="CHEBI:58053"/>
        <note>ligand shared between dimeric partners</note>
    </ligand>
</feature>
<feature type="binding site" evidence="1">
    <location>
        <position position="13"/>
    </location>
    <ligand>
        <name>Mg(2+)</name>
        <dbReference type="ChEBI" id="CHEBI:18420"/>
    </ligand>
</feature>
<feature type="binding site" description="in other chain" evidence="1">
    <location>
        <begin position="38"/>
        <end position="41"/>
    </location>
    <ligand>
        <name>IMP</name>
        <dbReference type="ChEBI" id="CHEBI:58053"/>
        <note>ligand shared between dimeric partners</note>
    </ligand>
</feature>
<feature type="binding site" evidence="1">
    <location>
        <begin position="40"/>
        <end position="42"/>
    </location>
    <ligand>
        <name>GTP</name>
        <dbReference type="ChEBI" id="CHEBI:37565"/>
    </ligand>
</feature>
<feature type="binding site" evidence="1">
    <location>
        <position position="40"/>
    </location>
    <ligand>
        <name>Mg(2+)</name>
        <dbReference type="ChEBI" id="CHEBI:18420"/>
    </ligand>
</feature>
<feature type="binding site" description="in other chain" evidence="1">
    <location>
        <position position="128"/>
    </location>
    <ligand>
        <name>IMP</name>
        <dbReference type="ChEBI" id="CHEBI:58053"/>
        <note>ligand shared between dimeric partners</note>
    </ligand>
</feature>
<feature type="binding site" evidence="1">
    <location>
        <position position="142"/>
    </location>
    <ligand>
        <name>IMP</name>
        <dbReference type="ChEBI" id="CHEBI:58053"/>
        <note>ligand shared between dimeric partners</note>
    </ligand>
</feature>
<feature type="binding site" description="in other chain" evidence="1">
    <location>
        <position position="223"/>
    </location>
    <ligand>
        <name>IMP</name>
        <dbReference type="ChEBI" id="CHEBI:58053"/>
        <note>ligand shared between dimeric partners</note>
    </ligand>
</feature>
<feature type="binding site" description="in other chain" evidence="1">
    <location>
        <position position="238"/>
    </location>
    <ligand>
        <name>IMP</name>
        <dbReference type="ChEBI" id="CHEBI:58053"/>
        <note>ligand shared between dimeric partners</note>
    </ligand>
</feature>
<feature type="binding site" evidence="1">
    <location>
        <begin position="298"/>
        <end position="304"/>
    </location>
    <ligand>
        <name>substrate</name>
    </ligand>
</feature>
<feature type="binding site" description="in other chain" evidence="1">
    <location>
        <position position="302"/>
    </location>
    <ligand>
        <name>IMP</name>
        <dbReference type="ChEBI" id="CHEBI:58053"/>
        <note>ligand shared between dimeric partners</note>
    </ligand>
</feature>
<feature type="binding site" evidence="1">
    <location>
        <position position="304"/>
    </location>
    <ligand>
        <name>GTP</name>
        <dbReference type="ChEBI" id="CHEBI:37565"/>
    </ligand>
</feature>
<feature type="binding site" evidence="1">
    <location>
        <begin position="330"/>
        <end position="332"/>
    </location>
    <ligand>
        <name>GTP</name>
        <dbReference type="ChEBI" id="CHEBI:37565"/>
    </ligand>
</feature>
<feature type="binding site" evidence="1">
    <location>
        <begin position="412"/>
        <end position="414"/>
    </location>
    <ligand>
        <name>GTP</name>
        <dbReference type="ChEBI" id="CHEBI:37565"/>
    </ligand>
</feature>
<sequence length="429" mass="47424">MSSVVVVGTQWGDEGKGKITDFLSEHAEVVARYQGGNNAGHTIVFGGVKYKLHLIPSGIFYKEKICVIGNGLVVDPKALLEELKYLHDRGVSTDNLRVSNRAHVILPYHLKQDELEEASKGDNKIGTTKKGIGPAYMDKAARIGIRMADLLDREAFKEKLEQNLAQKNRLFEKMYDTEGFSVDEIFEEYFEYGQQIAQYVCDTSVVLNDALDNNHRVLFEGAQGVMLDIDHGTYPFVTSSNPIAGGVTVGTGVGPAKVTRVVGVCKAYTSRVGDGPFPTELHDEIGHQIREVGREYGTTTGRPRRVGWFDSVVVRHARRVSGLTDLSLNSIDVLTGIPTLKICVAYKCDGKVIDEVPANLNILAKCEPVYEELPGWTEDITGVRSLDELPENARKYVERVSELTGIQLSMFSVGPDRNQTNIVRNVYEA</sequence>
<gene>
    <name evidence="1" type="primary">purA</name>
    <name type="ordered locus">BALH_4974</name>
</gene>
<accession>A0RLP6</accession>
<proteinExistence type="inferred from homology"/>
<comment type="function">
    <text evidence="1">Plays an important role in the de novo pathway of purine nucleotide biosynthesis. Catalyzes the first committed step in the biosynthesis of AMP from IMP.</text>
</comment>
<comment type="catalytic activity">
    <reaction evidence="1">
        <text>IMP + L-aspartate + GTP = N(6)-(1,2-dicarboxyethyl)-AMP + GDP + phosphate + 2 H(+)</text>
        <dbReference type="Rhea" id="RHEA:15753"/>
        <dbReference type="ChEBI" id="CHEBI:15378"/>
        <dbReference type="ChEBI" id="CHEBI:29991"/>
        <dbReference type="ChEBI" id="CHEBI:37565"/>
        <dbReference type="ChEBI" id="CHEBI:43474"/>
        <dbReference type="ChEBI" id="CHEBI:57567"/>
        <dbReference type="ChEBI" id="CHEBI:58053"/>
        <dbReference type="ChEBI" id="CHEBI:58189"/>
        <dbReference type="EC" id="6.3.4.4"/>
    </reaction>
</comment>
<comment type="cofactor">
    <cofactor evidence="1">
        <name>Mg(2+)</name>
        <dbReference type="ChEBI" id="CHEBI:18420"/>
    </cofactor>
    <text evidence="1">Binds 1 Mg(2+) ion per subunit.</text>
</comment>
<comment type="pathway">
    <text evidence="1">Purine metabolism; AMP biosynthesis via de novo pathway; AMP from IMP: step 1/2.</text>
</comment>
<comment type="subunit">
    <text evidence="1">Homodimer.</text>
</comment>
<comment type="subcellular location">
    <subcellularLocation>
        <location evidence="1">Cytoplasm</location>
    </subcellularLocation>
</comment>
<comment type="similarity">
    <text evidence="1">Belongs to the adenylosuccinate synthetase family.</text>
</comment>
<comment type="sequence caution" evidence="2">
    <conflict type="erroneous initiation">
        <sequence resource="EMBL-CDS" id="ABK88139"/>
    </conflict>
</comment>
<protein>
    <recommendedName>
        <fullName evidence="1">Adenylosuccinate synthetase</fullName>
        <shortName evidence="1">AMPSase</shortName>
        <shortName evidence="1">AdSS</shortName>
        <ecNumber evidence="1">6.3.4.4</ecNumber>
    </recommendedName>
    <alternativeName>
        <fullName evidence="1">IMP--aspartate ligase</fullName>
    </alternativeName>
</protein>
<name>PURA_BACAH</name>
<organism>
    <name type="scientific">Bacillus thuringiensis (strain Al Hakam)</name>
    <dbReference type="NCBI Taxonomy" id="412694"/>
    <lineage>
        <taxon>Bacteria</taxon>
        <taxon>Bacillati</taxon>
        <taxon>Bacillota</taxon>
        <taxon>Bacilli</taxon>
        <taxon>Bacillales</taxon>
        <taxon>Bacillaceae</taxon>
        <taxon>Bacillus</taxon>
        <taxon>Bacillus cereus group</taxon>
    </lineage>
</organism>
<keyword id="KW-0963">Cytoplasm</keyword>
<keyword id="KW-0342">GTP-binding</keyword>
<keyword id="KW-0436">Ligase</keyword>
<keyword id="KW-0460">Magnesium</keyword>
<keyword id="KW-0479">Metal-binding</keyword>
<keyword id="KW-0547">Nucleotide-binding</keyword>
<keyword id="KW-0658">Purine biosynthesis</keyword>
<dbReference type="EC" id="6.3.4.4" evidence="1"/>
<dbReference type="EMBL" id="CP000485">
    <property type="protein sequence ID" value="ABK88139.1"/>
    <property type="status" value="ALT_INIT"/>
    <property type="molecule type" value="Genomic_DNA"/>
</dbReference>
<dbReference type="RefSeq" id="WP_000100223.1">
    <property type="nucleotide sequence ID" value="NC_008600.1"/>
</dbReference>
<dbReference type="SMR" id="A0RLP6"/>
<dbReference type="KEGG" id="btl:BALH_4974"/>
<dbReference type="HOGENOM" id="CLU_029848_0_0_9"/>
<dbReference type="UniPathway" id="UPA00075">
    <property type="reaction ID" value="UER00335"/>
</dbReference>
<dbReference type="GO" id="GO:0005737">
    <property type="term" value="C:cytoplasm"/>
    <property type="evidence" value="ECO:0007669"/>
    <property type="project" value="UniProtKB-SubCell"/>
</dbReference>
<dbReference type="GO" id="GO:0004019">
    <property type="term" value="F:adenylosuccinate synthase activity"/>
    <property type="evidence" value="ECO:0007669"/>
    <property type="project" value="UniProtKB-UniRule"/>
</dbReference>
<dbReference type="GO" id="GO:0005525">
    <property type="term" value="F:GTP binding"/>
    <property type="evidence" value="ECO:0007669"/>
    <property type="project" value="UniProtKB-UniRule"/>
</dbReference>
<dbReference type="GO" id="GO:0000287">
    <property type="term" value="F:magnesium ion binding"/>
    <property type="evidence" value="ECO:0007669"/>
    <property type="project" value="UniProtKB-UniRule"/>
</dbReference>
<dbReference type="GO" id="GO:0044208">
    <property type="term" value="P:'de novo' AMP biosynthetic process"/>
    <property type="evidence" value="ECO:0007669"/>
    <property type="project" value="UniProtKB-UniRule"/>
</dbReference>
<dbReference type="GO" id="GO:0046040">
    <property type="term" value="P:IMP metabolic process"/>
    <property type="evidence" value="ECO:0007669"/>
    <property type="project" value="TreeGrafter"/>
</dbReference>
<dbReference type="CDD" id="cd03108">
    <property type="entry name" value="AdSS"/>
    <property type="match status" value="1"/>
</dbReference>
<dbReference type="FunFam" id="1.10.300.10:FF:000001">
    <property type="entry name" value="Adenylosuccinate synthetase"/>
    <property type="match status" value="1"/>
</dbReference>
<dbReference type="FunFam" id="3.90.170.10:FF:000001">
    <property type="entry name" value="Adenylosuccinate synthetase"/>
    <property type="match status" value="1"/>
</dbReference>
<dbReference type="Gene3D" id="3.40.440.10">
    <property type="entry name" value="Adenylosuccinate Synthetase, subunit A, domain 1"/>
    <property type="match status" value="1"/>
</dbReference>
<dbReference type="Gene3D" id="1.10.300.10">
    <property type="entry name" value="Adenylosuccinate Synthetase, subunit A, domain 2"/>
    <property type="match status" value="1"/>
</dbReference>
<dbReference type="Gene3D" id="3.90.170.10">
    <property type="entry name" value="Adenylosuccinate Synthetase, subunit A, domain 3"/>
    <property type="match status" value="1"/>
</dbReference>
<dbReference type="HAMAP" id="MF_00011">
    <property type="entry name" value="Adenylosucc_synth"/>
    <property type="match status" value="1"/>
</dbReference>
<dbReference type="InterPro" id="IPR018220">
    <property type="entry name" value="Adenylosuccin_syn_GTP-bd"/>
</dbReference>
<dbReference type="InterPro" id="IPR033128">
    <property type="entry name" value="Adenylosuccin_syn_Lys_AS"/>
</dbReference>
<dbReference type="InterPro" id="IPR042109">
    <property type="entry name" value="Adenylosuccinate_synth_dom1"/>
</dbReference>
<dbReference type="InterPro" id="IPR042110">
    <property type="entry name" value="Adenylosuccinate_synth_dom2"/>
</dbReference>
<dbReference type="InterPro" id="IPR042111">
    <property type="entry name" value="Adenylosuccinate_synth_dom3"/>
</dbReference>
<dbReference type="InterPro" id="IPR001114">
    <property type="entry name" value="Adenylosuccinate_synthetase"/>
</dbReference>
<dbReference type="InterPro" id="IPR027417">
    <property type="entry name" value="P-loop_NTPase"/>
</dbReference>
<dbReference type="NCBIfam" id="NF002223">
    <property type="entry name" value="PRK01117.1"/>
    <property type="match status" value="1"/>
</dbReference>
<dbReference type="NCBIfam" id="TIGR00184">
    <property type="entry name" value="purA"/>
    <property type="match status" value="1"/>
</dbReference>
<dbReference type="PANTHER" id="PTHR11846">
    <property type="entry name" value="ADENYLOSUCCINATE SYNTHETASE"/>
    <property type="match status" value="1"/>
</dbReference>
<dbReference type="PANTHER" id="PTHR11846:SF0">
    <property type="entry name" value="ADENYLOSUCCINATE SYNTHETASE"/>
    <property type="match status" value="1"/>
</dbReference>
<dbReference type="Pfam" id="PF00709">
    <property type="entry name" value="Adenylsucc_synt"/>
    <property type="match status" value="1"/>
</dbReference>
<dbReference type="SMART" id="SM00788">
    <property type="entry name" value="Adenylsucc_synt"/>
    <property type="match status" value="1"/>
</dbReference>
<dbReference type="SUPFAM" id="SSF52540">
    <property type="entry name" value="P-loop containing nucleoside triphosphate hydrolases"/>
    <property type="match status" value="1"/>
</dbReference>
<dbReference type="PROSITE" id="PS01266">
    <property type="entry name" value="ADENYLOSUCCIN_SYN_1"/>
    <property type="match status" value="1"/>
</dbReference>
<dbReference type="PROSITE" id="PS00513">
    <property type="entry name" value="ADENYLOSUCCIN_SYN_2"/>
    <property type="match status" value="1"/>
</dbReference>